<protein>
    <recommendedName>
        <fullName evidence="1">Potassium-transporting ATPase KdpC subunit</fullName>
    </recommendedName>
    <alternativeName>
        <fullName evidence="1">ATP phosphohydrolase [potassium-transporting] C chain</fullName>
    </alternativeName>
    <alternativeName>
        <fullName evidence="1">Potassium-binding and translocating subunit C</fullName>
    </alternativeName>
    <alternativeName>
        <fullName evidence="1">Potassium-translocating ATPase C chain</fullName>
    </alternativeName>
</protein>
<gene>
    <name evidence="1" type="primary">kdpC</name>
    <name type="ordered locus">PSPTO_2244</name>
</gene>
<comment type="function">
    <text evidence="1">Part of the high-affinity ATP-driven potassium transport (or Kdp) system, which catalyzes the hydrolysis of ATP coupled with the electrogenic transport of potassium into the cytoplasm. This subunit acts as a catalytic chaperone that increases the ATP-binding affinity of the ATP-hydrolyzing subunit KdpB by the formation of a transient KdpB/KdpC/ATP ternary complex.</text>
</comment>
<comment type="subunit">
    <text evidence="1">The system is composed of three essential subunits: KdpA, KdpB and KdpC.</text>
</comment>
<comment type="subcellular location">
    <subcellularLocation>
        <location evidence="1">Cell inner membrane</location>
        <topology evidence="1">Single-pass membrane protein</topology>
    </subcellularLocation>
</comment>
<comment type="similarity">
    <text evidence="1">Belongs to the KdpC family.</text>
</comment>
<reference key="1">
    <citation type="journal article" date="2003" name="Proc. Natl. Acad. Sci. U.S.A.">
        <title>The complete genome sequence of the Arabidopsis and tomato pathogen Pseudomonas syringae pv. tomato DC3000.</title>
        <authorList>
            <person name="Buell C.R."/>
            <person name="Joardar V."/>
            <person name="Lindeberg M."/>
            <person name="Selengut J."/>
            <person name="Paulsen I.T."/>
            <person name="Gwinn M.L."/>
            <person name="Dodson R.J."/>
            <person name="DeBoy R.T."/>
            <person name="Durkin A.S."/>
            <person name="Kolonay J.F."/>
            <person name="Madupu R."/>
            <person name="Daugherty S.C."/>
            <person name="Brinkac L.M."/>
            <person name="Beanan M.J."/>
            <person name="Haft D.H."/>
            <person name="Nelson W.C."/>
            <person name="Davidsen T.M."/>
            <person name="Zafar N."/>
            <person name="Zhou L."/>
            <person name="Liu J."/>
            <person name="Yuan Q."/>
            <person name="Khouri H.M."/>
            <person name="Fedorova N.B."/>
            <person name="Tran B."/>
            <person name="Russell D."/>
            <person name="Berry K.J."/>
            <person name="Utterback T.R."/>
            <person name="Van Aken S.E."/>
            <person name="Feldblyum T.V."/>
            <person name="D'Ascenzo M."/>
            <person name="Deng W.-L."/>
            <person name="Ramos A.R."/>
            <person name="Alfano J.R."/>
            <person name="Cartinhour S."/>
            <person name="Chatterjee A.K."/>
            <person name="Delaney T.P."/>
            <person name="Lazarowitz S.G."/>
            <person name="Martin G.B."/>
            <person name="Schneider D.J."/>
            <person name="Tang X."/>
            <person name="Bender C.L."/>
            <person name="White O."/>
            <person name="Fraser C.M."/>
            <person name="Collmer A."/>
        </authorList>
    </citation>
    <scope>NUCLEOTIDE SEQUENCE [LARGE SCALE GENOMIC DNA]</scope>
    <source>
        <strain>ATCC BAA-871 / DC3000</strain>
    </source>
</reference>
<dbReference type="EMBL" id="AE016853">
    <property type="protein sequence ID" value="AAO55760.1"/>
    <property type="molecule type" value="Genomic_DNA"/>
</dbReference>
<dbReference type="RefSeq" id="NP_792065.1">
    <property type="nucleotide sequence ID" value="NC_004578.1"/>
</dbReference>
<dbReference type="RefSeq" id="WP_011103912.1">
    <property type="nucleotide sequence ID" value="NC_004578.1"/>
</dbReference>
<dbReference type="SMR" id="Q883V4"/>
<dbReference type="STRING" id="223283.PSPTO_2244"/>
<dbReference type="GeneID" id="1183895"/>
<dbReference type="KEGG" id="pst:PSPTO_2244"/>
<dbReference type="PATRIC" id="fig|223283.9.peg.2275"/>
<dbReference type="eggNOG" id="COG2156">
    <property type="taxonomic scope" value="Bacteria"/>
</dbReference>
<dbReference type="HOGENOM" id="CLU_077094_2_0_6"/>
<dbReference type="OrthoDB" id="9788285at2"/>
<dbReference type="PhylomeDB" id="Q883V4"/>
<dbReference type="Proteomes" id="UP000002515">
    <property type="component" value="Chromosome"/>
</dbReference>
<dbReference type="GO" id="GO:0005886">
    <property type="term" value="C:plasma membrane"/>
    <property type="evidence" value="ECO:0007669"/>
    <property type="project" value="UniProtKB-SubCell"/>
</dbReference>
<dbReference type="GO" id="GO:0005524">
    <property type="term" value="F:ATP binding"/>
    <property type="evidence" value="ECO:0007669"/>
    <property type="project" value="UniProtKB-UniRule"/>
</dbReference>
<dbReference type="GO" id="GO:0008556">
    <property type="term" value="F:P-type potassium transmembrane transporter activity"/>
    <property type="evidence" value="ECO:0007669"/>
    <property type="project" value="InterPro"/>
</dbReference>
<dbReference type="HAMAP" id="MF_00276">
    <property type="entry name" value="KdpC"/>
    <property type="match status" value="1"/>
</dbReference>
<dbReference type="InterPro" id="IPR003820">
    <property type="entry name" value="KdpC"/>
</dbReference>
<dbReference type="NCBIfam" id="TIGR00681">
    <property type="entry name" value="kdpC"/>
    <property type="match status" value="1"/>
</dbReference>
<dbReference type="NCBIfam" id="NF001454">
    <property type="entry name" value="PRK00315.1"/>
    <property type="match status" value="1"/>
</dbReference>
<dbReference type="PANTHER" id="PTHR30042">
    <property type="entry name" value="POTASSIUM-TRANSPORTING ATPASE C CHAIN"/>
    <property type="match status" value="1"/>
</dbReference>
<dbReference type="PANTHER" id="PTHR30042:SF2">
    <property type="entry name" value="POTASSIUM-TRANSPORTING ATPASE KDPC SUBUNIT"/>
    <property type="match status" value="1"/>
</dbReference>
<dbReference type="Pfam" id="PF02669">
    <property type="entry name" value="KdpC"/>
    <property type="match status" value="1"/>
</dbReference>
<dbReference type="PIRSF" id="PIRSF001296">
    <property type="entry name" value="K_ATPase_KdpC"/>
    <property type="match status" value="1"/>
</dbReference>
<name>KDPC_PSESM</name>
<evidence type="ECO:0000255" key="1">
    <source>
        <dbReference type="HAMAP-Rule" id="MF_00276"/>
    </source>
</evidence>
<sequence>MSSVLRPALSLIVLMSLITGVAYPLVVTGVAQVAFPAQANGSLLYDEAGKVRGSALIAQSFTGDEWFQSRPSAGAFATVASGASNFAPSNPALATRVTEDAAKLANAAQGPVPLALLTTSGSGLDPHLSPEAIAWQAGRVAAARQLPLDKLQALIDASTQRPLIGPPVVNVLTLNMSLNQLPSAPRNAQL</sequence>
<feature type="chain" id="PRO_0000197003" description="Potassium-transporting ATPase KdpC subunit">
    <location>
        <begin position="1"/>
        <end position="190"/>
    </location>
</feature>
<feature type="transmembrane region" description="Helical" evidence="1">
    <location>
        <begin position="11"/>
        <end position="31"/>
    </location>
</feature>
<keyword id="KW-0067">ATP-binding</keyword>
<keyword id="KW-0997">Cell inner membrane</keyword>
<keyword id="KW-1003">Cell membrane</keyword>
<keyword id="KW-0406">Ion transport</keyword>
<keyword id="KW-0472">Membrane</keyword>
<keyword id="KW-0547">Nucleotide-binding</keyword>
<keyword id="KW-0630">Potassium</keyword>
<keyword id="KW-0633">Potassium transport</keyword>
<keyword id="KW-1185">Reference proteome</keyword>
<keyword id="KW-0812">Transmembrane</keyword>
<keyword id="KW-1133">Transmembrane helix</keyword>
<keyword id="KW-0813">Transport</keyword>
<accession>Q883V4</accession>
<proteinExistence type="inferred from homology"/>
<organism>
    <name type="scientific">Pseudomonas syringae pv. tomato (strain ATCC BAA-871 / DC3000)</name>
    <dbReference type="NCBI Taxonomy" id="223283"/>
    <lineage>
        <taxon>Bacteria</taxon>
        <taxon>Pseudomonadati</taxon>
        <taxon>Pseudomonadota</taxon>
        <taxon>Gammaproteobacteria</taxon>
        <taxon>Pseudomonadales</taxon>
        <taxon>Pseudomonadaceae</taxon>
        <taxon>Pseudomonas</taxon>
    </lineage>
</organism>